<sequence>MKLVLASNNRGKLAELQAMLAPLGVQLIPQAELGVGEAEEPFHTFVENALAKARFASAHTGLPALADDAGLCVQAFGGQPGVQTAYYATQFGYDKGDANNVRALLEQMQGIDDRRAAMVSTLVAVRSPQDPEPLIAVGRVAGEIARAPRGTGGFGFDPVMVLPAFGKTFAELPPEVKNAHSHRGRSSRQMLELMREHWFAGTSER</sequence>
<protein>
    <recommendedName>
        <fullName evidence="1">dITP/XTP pyrophosphatase</fullName>
        <ecNumber evidence="1">3.6.1.66</ecNumber>
    </recommendedName>
    <alternativeName>
        <fullName evidence="1">Non-canonical purine NTP pyrophosphatase</fullName>
    </alternativeName>
    <alternativeName>
        <fullName evidence="1">Non-standard purine NTP pyrophosphatase</fullName>
    </alternativeName>
    <alternativeName>
        <fullName evidence="1">Nucleoside-triphosphate diphosphatase</fullName>
    </alternativeName>
    <alternativeName>
        <fullName evidence="1">Nucleoside-triphosphate pyrophosphatase</fullName>
        <shortName evidence="1">NTPase</shortName>
    </alternativeName>
</protein>
<dbReference type="EC" id="3.6.1.66" evidence="1"/>
<dbReference type="EMBL" id="CP001392">
    <property type="protein sequence ID" value="ACM32335.1"/>
    <property type="molecule type" value="Genomic_DNA"/>
</dbReference>
<dbReference type="SMR" id="B9MEJ9"/>
<dbReference type="KEGG" id="dia:Dtpsy_0857"/>
<dbReference type="eggNOG" id="COG0127">
    <property type="taxonomic scope" value="Bacteria"/>
</dbReference>
<dbReference type="HOGENOM" id="CLU_082080_0_3_4"/>
<dbReference type="Proteomes" id="UP000000450">
    <property type="component" value="Chromosome"/>
</dbReference>
<dbReference type="GO" id="GO:0005829">
    <property type="term" value="C:cytosol"/>
    <property type="evidence" value="ECO:0007669"/>
    <property type="project" value="TreeGrafter"/>
</dbReference>
<dbReference type="GO" id="GO:0035870">
    <property type="term" value="F:dITP diphosphatase activity"/>
    <property type="evidence" value="ECO:0007669"/>
    <property type="project" value="RHEA"/>
</dbReference>
<dbReference type="GO" id="GO:0036220">
    <property type="term" value="F:ITP diphosphatase activity"/>
    <property type="evidence" value="ECO:0007669"/>
    <property type="project" value="UniProtKB-EC"/>
</dbReference>
<dbReference type="GO" id="GO:0046872">
    <property type="term" value="F:metal ion binding"/>
    <property type="evidence" value="ECO:0007669"/>
    <property type="project" value="UniProtKB-KW"/>
</dbReference>
<dbReference type="GO" id="GO:0000166">
    <property type="term" value="F:nucleotide binding"/>
    <property type="evidence" value="ECO:0007669"/>
    <property type="project" value="UniProtKB-KW"/>
</dbReference>
<dbReference type="GO" id="GO:0017111">
    <property type="term" value="F:ribonucleoside triphosphate phosphatase activity"/>
    <property type="evidence" value="ECO:0007669"/>
    <property type="project" value="InterPro"/>
</dbReference>
<dbReference type="GO" id="GO:0036222">
    <property type="term" value="F:XTP diphosphatase activity"/>
    <property type="evidence" value="ECO:0007669"/>
    <property type="project" value="RHEA"/>
</dbReference>
<dbReference type="GO" id="GO:0009117">
    <property type="term" value="P:nucleotide metabolic process"/>
    <property type="evidence" value="ECO:0007669"/>
    <property type="project" value="UniProtKB-KW"/>
</dbReference>
<dbReference type="GO" id="GO:0009146">
    <property type="term" value="P:purine nucleoside triphosphate catabolic process"/>
    <property type="evidence" value="ECO:0007669"/>
    <property type="project" value="UniProtKB-UniRule"/>
</dbReference>
<dbReference type="CDD" id="cd00515">
    <property type="entry name" value="HAM1"/>
    <property type="match status" value="1"/>
</dbReference>
<dbReference type="FunFam" id="3.90.950.10:FF:000001">
    <property type="entry name" value="dITP/XTP pyrophosphatase"/>
    <property type="match status" value="1"/>
</dbReference>
<dbReference type="Gene3D" id="3.90.950.10">
    <property type="match status" value="1"/>
</dbReference>
<dbReference type="HAMAP" id="MF_01405">
    <property type="entry name" value="Non_canon_purine_NTPase"/>
    <property type="match status" value="1"/>
</dbReference>
<dbReference type="InterPro" id="IPR020922">
    <property type="entry name" value="dITP/XTP_pyrophosphatase"/>
</dbReference>
<dbReference type="InterPro" id="IPR029001">
    <property type="entry name" value="ITPase-like_fam"/>
</dbReference>
<dbReference type="InterPro" id="IPR002637">
    <property type="entry name" value="RdgB/HAM1"/>
</dbReference>
<dbReference type="NCBIfam" id="TIGR00042">
    <property type="entry name" value="RdgB/HAM1 family non-canonical purine NTP pyrophosphatase"/>
    <property type="match status" value="1"/>
</dbReference>
<dbReference type="PANTHER" id="PTHR11067:SF9">
    <property type="entry name" value="INOSINE TRIPHOSPHATE PYROPHOSPHATASE"/>
    <property type="match status" value="1"/>
</dbReference>
<dbReference type="PANTHER" id="PTHR11067">
    <property type="entry name" value="INOSINE TRIPHOSPHATE PYROPHOSPHATASE/HAM1 PROTEIN"/>
    <property type="match status" value="1"/>
</dbReference>
<dbReference type="Pfam" id="PF01725">
    <property type="entry name" value="Ham1p_like"/>
    <property type="match status" value="1"/>
</dbReference>
<dbReference type="SUPFAM" id="SSF52972">
    <property type="entry name" value="ITPase-like"/>
    <property type="match status" value="1"/>
</dbReference>
<accession>B9MEJ9</accession>
<evidence type="ECO:0000255" key="1">
    <source>
        <dbReference type="HAMAP-Rule" id="MF_01405"/>
    </source>
</evidence>
<comment type="function">
    <text evidence="1">Pyrophosphatase that catalyzes the hydrolysis of nucleoside triphosphates to their monophosphate derivatives, with a high preference for the non-canonical purine nucleotides XTP (xanthosine triphosphate), dITP (deoxyinosine triphosphate) and ITP. Seems to function as a house-cleaning enzyme that removes non-canonical purine nucleotides from the nucleotide pool, thus preventing their incorporation into DNA/RNA and avoiding chromosomal lesions.</text>
</comment>
<comment type="catalytic activity">
    <reaction evidence="1">
        <text>XTP + H2O = XMP + diphosphate + H(+)</text>
        <dbReference type="Rhea" id="RHEA:28610"/>
        <dbReference type="ChEBI" id="CHEBI:15377"/>
        <dbReference type="ChEBI" id="CHEBI:15378"/>
        <dbReference type="ChEBI" id="CHEBI:33019"/>
        <dbReference type="ChEBI" id="CHEBI:57464"/>
        <dbReference type="ChEBI" id="CHEBI:61314"/>
        <dbReference type="EC" id="3.6.1.66"/>
    </reaction>
</comment>
<comment type="catalytic activity">
    <reaction evidence="1">
        <text>dITP + H2O = dIMP + diphosphate + H(+)</text>
        <dbReference type="Rhea" id="RHEA:28342"/>
        <dbReference type="ChEBI" id="CHEBI:15377"/>
        <dbReference type="ChEBI" id="CHEBI:15378"/>
        <dbReference type="ChEBI" id="CHEBI:33019"/>
        <dbReference type="ChEBI" id="CHEBI:61194"/>
        <dbReference type="ChEBI" id="CHEBI:61382"/>
        <dbReference type="EC" id="3.6.1.66"/>
    </reaction>
</comment>
<comment type="catalytic activity">
    <reaction evidence="1">
        <text>ITP + H2O = IMP + diphosphate + H(+)</text>
        <dbReference type="Rhea" id="RHEA:29399"/>
        <dbReference type="ChEBI" id="CHEBI:15377"/>
        <dbReference type="ChEBI" id="CHEBI:15378"/>
        <dbReference type="ChEBI" id="CHEBI:33019"/>
        <dbReference type="ChEBI" id="CHEBI:58053"/>
        <dbReference type="ChEBI" id="CHEBI:61402"/>
        <dbReference type="EC" id="3.6.1.66"/>
    </reaction>
</comment>
<comment type="cofactor">
    <cofactor evidence="1">
        <name>Mg(2+)</name>
        <dbReference type="ChEBI" id="CHEBI:18420"/>
    </cofactor>
    <text evidence="1">Binds 1 Mg(2+) ion per subunit.</text>
</comment>
<comment type="subunit">
    <text evidence="1">Homodimer.</text>
</comment>
<comment type="similarity">
    <text evidence="1">Belongs to the HAM1 NTPase family.</text>
</comment>
<keyword id="KW-0378">Hydrolase</keyword>
<keyword id="KW-0460">Magnesium</keyword>
<keyword id="KW-0479">Metal-binding</keyword>
<keyword id="KW-0546">Nucleotide metabolism</keyword>
<keyword id="KW-0547">Nucleotide-binding</keyword>
<keyword id="KW-1185">Reference proteome</keyword>
<feature type="chain" id="PRO_1000184579" description="dITP/XTP pyrophosphatase">
    <location>
        <begin position="1"/>
        <end position="205"/>
    </location>
</feature>
<feature type="active site" description="Proton acceptor" evidence="1">
    <location>
        <position position="68"/>
    </location>
</feature>
<feature type="binding site" evidence="1">
    <location>
        <begin position="7"/>
        <end position="12"/>
    </location>
    <ligand>
        <name>substrate</name>
    </ligand>
</feature>
<feature type="binding site" evidence="1">
    <location>
        <position position="39"/>
    </location>
    <ligand>
        <name>Mg(2+)</name>
        <dbReference type="ChEBI" id="CHEBI:18420"/>
    </ligand>
</feature>
<feature type="binding site" evidence="1">
    <location>
        <position position="68"/>
    </location>
    <ligand>
        <name>Mg(2+)</name>
        <dbReference type="ChEBI" id="CHEBI:18420"/>
    </ligand>
</feature>
<feature type="binding site" evidence="1">
    <location>
        <position position="69"/>
    </location>
    <ligand>
        <name>substrate</name>
    </ligand>
</feature>
<feature type="binding site" evidence="1">
    <location>
        <begin position="154"/>
        <end position="157"/>
    </location>
    <ligand>
        <name>substrate</name>
    </ligand>
</feature>
<feature type="binding site" evidence="1">
    <location>
        <position position="177"/>
    </location>
    <ligand>
        <name>substrate</name>
    </ligand>
</feature>
<feature type="binding site" evidence="1">
    <location>
        <begin position="182"/>
        <end position="183"/>
    </location>
    <ligand>
        <name>substrate</name>
    </ligand>
</feature>
<gene>
    <name type="ordered locus">Dtpsy_0857</name>
</gene>
<proteinExistence type="inferred from homology"/>
<name>IXTPA_ACIET</name>
<reference key="1">
    <citation type="submission" date="2009-01" db="EMBL/GenBank/DDBJ databases">
        <title>Complete sequence of Diaphorobacter sp. TPSY.</title>
        <authorList>
            <consortium name="US DOE Joint Genome Institute"/>
            <person name="Lucas S."/>
            <person name="Copeland A."/>
            <person name="Lapidus A."/>
            <person name="Glavina del Rio T."/>
            <person name="Tice H."/>
            <person name="Bruce D."/>
            <person name="Goodwin L."/>
            <person name="Pitluck S."/>
            <person name="Chertkov O."/>
            <person name="Brettin T."/>
            <person name="Detter J.C."/>
            <person name="Han C."/>
            <person name="Larimer F."/>
            <person name="Land M."/>
            <person name="Hauser L."/>
            <person name="Kyrpides N."/>
            <person name="Mikhailova N."/>
            <person name="Coates J.D."/>
        </authorList>
    </citation>
    <scope>NUCLEOTIDE SEQUENCE [LARGE SCALE GENOMIC DNA]</scope>
    <source>
        <strain>TPSY</strain>
    </source>
</reference>
<organism>
    <name type="scientific">Acidovorax ebreus (strain TPSY)</name>
    <name type="common">Diaphorobacter sp. (strain TPSY)</name>
    <dbReference type="NCBI Taxonomy" id="535289"/>
    <lineage>
        <taxon>Bacteria</taxon>
        <taxon>Pseudomonadati</taxon>
        <taxon>Pseudomonadota</taxon>
        <taxon>Betaproteobacteria</taxon>
        <taxon>Burkholderiales</taxon>
        <taxon>Comamonadaceae</taxon>
        <taxon>Diaphorobacter</taxon>
    </lineage>
</organism>